<comment type="function">
    <text evidence="2">Glycosyltransferase involved in the biosynthesis of the core oligosaccharide region of lipopolysaccharide (LPS) (PubMed:16963083). Catalyzes the addition of the first heptose unit to one 3-deoxy-D-manno-octulosonic acid (Kdo) residue of the Kdo2-lipid A module (PubMed:16963083).</text>
</comment>
<comment type="catalytic activity">
    <reaction evidence="2">
        <text>an alpha-Kdo-(2-&gt;4)-alpha-Kdo-(2-&gt;6)-lipid A + ADP-L-glycero-beta-D-manno-heptose = an L-alpha-D-Hep-(1-&gt;5)-[alpha-Kdo-(2-&gt;4)]-alpha-Kdo-(2-&gt;6)-lipid A + ADP + H(+)</text>
        <dbReference type="Rhea" id="RHEA:74067"/>
        <dbReference type="ChEBI" id="CHEBI:15378"/>
        <dbReference type="ChEBI" id="CHEBI:61506"/>
        <dbReference type="ChEBI" id="CHEBI:176431"/>
        <dbReference type="ChEBI" id="CHEBI:193068"/>
        <dbReference type="ChEBI" id="CHEBI:456216"/>
        <dbReference type="EC" id="2.4.99.23"/>
    </reaction>
</comment>
<comment type="catalytic activity">
    <reaction evidence="2">
        <text>alpha-Kdo-(2-&gt;4)-alpha-Kdo-(2-&gt;6)-lipid A (E. coli) + ADP-L-glycero-beta-D-manno-heptose = L-alpha-D-Hep-(1-&gt;5)-[alpha-Kdo-(2-&gt;4)]-alpha-Kdo-(2-&gt;6)-lipid A (E. coli) + ADP + H(+)</text>
        <dbReference type="Rhea" id="RHEA:28402"/>
        <dbReference type="ChEBI" id="CHEBI:15378"/>
        <dbReference type="ChEBI" id="CHEBI:58540"/>
        <dbReference type="ChEBI" id="CHEBI:61502"/>
        <dbReference type="ChEBI" id="CHEBI:61506"/>
        <dbReference type="ChEBI" id="CHEBI:456216"/>
        <dbReference type="EC" id="2.4.99.23"/>
    </reaction>
</comment>
<comment type="activity regulation">
    <text evidence="2">Inhibited by ADP-L-glycero-beta-D-gluco-2-deoxy-2-fluoro-heptose (ADP-2F-heptose), a non-cleavable analog of the substrate ADP-L-glycero-beta-D-manno-heptose.</text>
</comment>
<comment type="biophysicochemical properties">
    <kinetics>
        <KM evidence="2">7 uM for ADP-heptose</KM>
        <KM evidence="2">7 uM for Kdo2-lipid A</KM>
    </kinetics>
</comment>
<comment type="pathway">
    <text evidence="2">Bacterial outer membrane biogenesis; LPS core biosynthesis.</text>
</comment>
<comment type="subunit">
    <text evidence="5">Monomer.</text>
</comment>
<comment type="subcellular location">
    <subcellularLocation>
        <location evidence="1">Cell inner membrane</location>
        <topology evidence="1">Peripheral membrane protein</topology>
        <orientation evidence="1">Cytoplasmic side</orientation>
    </subcellularLocation>
</comment>
<comment type="domain">
    <text evidence="2">Composed of two domains connected by an extended peptide linker (PubMed:16963083). Displays the classical GT-B fold (PubMed:16963083). Does not undergo a domain rotation, characteristic of the GT-B family, upon substrate binding, but allows the substrate analog and the reaction product to adopt remarkably distinct conformations inside the active site (PubMed:16963083).</text>
</comment>
<comment type="similarity">
    <text evidence="4">Belongs to the glycosyltransferase 9 family.</text>
</comment>
<gene>
    <name evidence="3" type="primary">waaC</name>
    <name evidence="6" type="ORF">W817_20285</name>
</gene>
<dbReference type="EC" id="2.4.99.23" evidence="2"/>
<dbReference type="EMBL" id="CP007149">
    <property type="protein sequence ID" value="AJM75822.1"/>
    <property type="molecule type" value="Genomic_DNA"/>
</dbReference>
<dbReference type="PDB" id="2GT1">
    <property type="method" value="X-ray"/>
    <property type="resolution" value="1.90 A"/>
    <property type="chains" value="A/B=1-326"/>
</dbReference>
<dbReference type="PDB" id="2H1F">
    <property type="method" value="X-ray"/>
    <property type="resolution" value="2.40 A"/>
    <property type="chains" value="A/B=1-326"/>
</dbReference>
<dbReference type="PDB" id="2H1H">
    <property type="method" value="X-ray"/>
    <property type="resolution" value="2.40 A"/>
    <property type="chains" value="A/B=1-326"/>
</dbReference>
<dbReference type="PDBsum" id="2GT1"/>
<dbReference type="PDBsum" id="2H1F"/>
<dbReference type="PDBsum" id="2H1H"/>
<dbReference type="SMR" id="P0DX54"/>
<dbReference type="UniPathway" id="UPA00958"/>
<dbReference type="GO" id="GO:0005829">
    <property type="term" value="C:cytosol"/>
    <property type="evidence" value="ECO:0007669"/>
    <property type="project" value="TreeGrafter"/>
</dbReference>
<dbReference type="GO" id="GO:0005886">
    <property type="term" value="C:plasma membrane"/>
    <property type="evidence" value="ECO:0007669"/>
    <property type="project" value="UniProtKB-SubCell"/>
</dbReference>
<dbReference type="GO" id="GO:0008713">
    <property type="term" value="F:ADP-heptose-lipopolysaccharide heptosyltransferase activity"/>
    <property type="evidence" value="ECO:0007669"/>
    <property type="project" value="TreeGrafter"/>
</dbReference>
<dbReference type="GO" id="GO:0009244">
    <property type="term" value="P:lipopolysaccharide core region biosynthetic process"/>
    <property type="evidence" value="ECO:0007669"/>
    <property type="project" value="UniProtKB-UniPathway"/>
</dbReference>
<dbReference type="CDD" id="cd03789">
    <property type="entry name" value="GT9_LPS_heptosyltransferase"/>
    <property type="match status" value="1"/>
</dbReference>
<dbReference type="FunFam" id="3.40.50.2000:FF:000106">
    <property type="entry name" value="Lipopolysaccharide heptosyltransferase 1"/>
    <property type="match status" value="1"/>
</dbReference>
<dbReference type="FunFam" id="3.40.50.2000:FF:000075">
    <property type="entry name" value="Lipopolysaccharide heptosyltransferase I"/>
    <property type="match status" value="1"/>
</dbReference>
<dbReference type="Gene3D" id="3.40.50.2000">
    <property type="entry name" value="Glycogen Phosphorylase B"/>
    <property type="match status" value="2"/>
</dbReference>
<dbReference type="InterPro" id="IPR002201">
    <property type="entry name" value="Glyco_trans_9"/>
</dbReference>
<dbReference type="InterPro" id="IPR011908">
    <property type="entry name" value="LipoPS_heptosylTferase-I"/>
</dbReference>
<dbReference type="InterPro" id="IPR051199">
    <property type="entry name" value="LPS_LOS_Heptosyltrfase"/>
</dbReference>
<dbReference type="NCBIfam" id="TIGR02193">
    <property type="entry name" value="heptsyl_trn_I"/>
    <property type="match status" value="1"/>
</dbReference>
<dbReference type="NCBIfam" id="NF008204">
    <property type="entry name" value="PRK10964.1"/>
    <property type="match status" value="1"/>
</dbReference>
<dbReference type="PANTHER" id="PTHR30160:SF19">
    <property type="entry name" value="LIPOPOLYSACCHARIDE HEPTOSYLTRANSFERASE 1"/>
    <property type="match status" value="1"/>
</dbReference>
<dbReference type="PANTHER" id="PTHR30160">
    <property type="entry name" value="TETRAACYLDISACCHARIDE 4'-KINASE-RELATED"/>
    <property type="match status" value="1"/>
</dbReference>
<dbReference type="Pfam" id="PF01075">
    <property type="entry name" value="Glyco_transf_9"/>
    <property type="match status" value="1"/>
</dbReference>
<dbReference type="SUPFAM" id="SSF53756">
    <property type="entry name" value="UDP-Glycosyltransferase/glycogen phosphorylase"/>
    <property type="match status" value="1"/>
</dbReference>
<proteinExistence type="evidence at protein level"/>
<accession>P0DX54</accession>
<protein>
    <recommendedName>
        <fullName evidence="4">Lipopolysaccharide heptosyltransferase 1</fullName>
        <ecNumber evidence="2">2.4.99.23</ecNumber>
    </recommendedName>
    <alternativeName>
        <fullName evidence="4">ADP-heptose:lipopolysaccharide heptosyltransferase I</fullName>
        <shortName evidence="4">ADP-heptose:LPS heptosyltransferase I</shortName>
        <shortName evidence="4">Heptosyltransferase I</shortName>
    </alternativeName>
</protein>
<keyword id="KW-0002">3D-structure</keyword>
<keyword id="KW-0997">Cell inner membrane</keyword>
<keyword id="KW-1003">Cell membrane</keyword>
<keyword id="KW-0328">Glycosyltransferase</keyword>
<keyword id="KW-0448">Lipopolysaccharide biosynthesis</keyword>
<keyword id="KW-0472">Membrane</keyword>
<keyword id="KW-0808">Transferase</keyword>
<reference key="1">
    <citation type="journal article" date="2015" name="Genome Announc.">
        <title>Complete genome sequence of Escherichia coli strain RS218 (O18:H7:K1), associated with neonatal meningitis.</title>
        <authorList>
            <person name="Wijetunge D.S."/>
            <person name="Katani R."/>
            <person name="Kapur V."/>
            <person name="Kariyawasam S."/>
        </authorList>
    </citation>
    <scope>NUCLEOTIDE SEQUENCE [LARGE SCALE GENOMIC DNA]</scope>
    <source>
        <strain>RS218 / NMEC</strain>
    </source>
</reference>
<reference evidence="7 8 9" key="2">
    <citation type="journal article" date="2006" name="J. Mol. Biol.">
        <title>Structure of the Escherichia coli heptosyltransferase WaaC: binary complexes with ADP and ADP-2-deoxy-2-fluoro heptose.</title>
        <authorList>
            <person name="Grizot S."/>
            <person name="Salem M."/>
            <person name="Vongsouthi V."/>
            <person name="Durand L."/>
            <person name="Moreau F."/>
            <person name="Dohi H."/>
            <person name="Vincent S."/>
            <person name="Escaich S."/>
            <person name="Ducruix A."/>
        </authorList>
    </citation>
    <scope>X-RAY CRYSTALLOGRAPHY (1.90 ANGSTROMS) OF 1-326 OF APOENZYME AND IN COMPLEXES WITH ADP AND ADP-2-DEOXY-2-FLUORO HEPTOSE</scope>
    <scope>FUNCTION</scope>
    <scope>CATALYTIC ACTIVITY</scope>
    <scope>ACTIVITY REGULATION</scope>
    <scope>BIOPHYSICOCHEMICAL PROPERTIES</scope>
    <scope>PATHWAY</scope>
    <scope>DOMAIN</scope>
    <scope>MUTAGENESIS OF ASP-13; LYS-192; ASP-261 AND HIS-266</scope>
    <source>
        <strain>RS218 / NMEC</strain>
    </source>
</reference>
<sequence>MRVLIVKTSSMGDVLHTLPALTDAQQAIPGIKFDWVVEEGFAQIPSWHAAVERVIPVAIRRWRKAWFSAPIKAERKAFREALQAKNYDAVIDAQGLVKSAALVTRLAHGVKHGMDWQTAREPLASLFYNRKHHIAKQQHAVERTRELFAKSLGYSKPQTQGDYAIAQHFLTNLPTDAGEYAVFLHATTRDDKHWPEEHWRELIGLLADSGIRIKLPWGAPHEEERAKRLAEGFAYVEVLPKMSLEGVARVLAGAKFVVSVDTGLSHLTAALDRPNITVYGPTDPGLIGGYGKNQMVCRAPGNELSQLTANAVKQFIEENAEKAAMI</sequence>
<feature type="chain" id="PRO_0000459131" description="Lipopolysaccharide heptosyltransferase 1">
    <location>
        <begin position="1"/>
        <end position="326"/>
    </location>
</feature>
<feature type="binding site" evidence="2 8">
    <location>
        <position position="187"/>
    </location>
    <ligand>
        <name>ADP</name>
        <dbReference type="ChEBI" id="CHEBI:456216"/>
    </ligand>
</feature>
<feature type="binding site" evidence="5 9">
    <location>
        <position position="187"/>
    </location>
    <ligand>
        <name>ADP-L-glycero-beta-D-manno-heptose</name>
        <dbReference type="ChEBI" id="CHEBI:61506"/>
    </ligand>
</feature>
<feature type="binding site" evidence="2 8">
    <location>
        <position position="188"/>
    </location>
    <ligand>
        <name>ADP</name>
        <dbReference type="ChEBI" id="CHEBI:456216"/>
    </ligand>
</feature>
<feature type="binding site" evidence="5 9">
    <location>
        <position position="188"/>
    </location>
    <ligand>
        <name>ADP-L-glycero-beta-D-manno-heptose</name>
        <dbReference type="ChEBI" id="CHEBI:61506"/>
    </ligand>
</feature>
<feature type="binding site" evidence="2 8">
    <location>
        <position position="192"/>
    </location>
    <ligand>
        <name>ADP</name>
        <dbReference type="ChEBI" id="CHEBI:456216"/>
    </ligand>
</feature>
<feature type="binding site" evidence="5 9">
    <location>
        <position position="192"/>
    </location>
    <ligand>
        <name>ADP-L-glycero-beta-D-manno-heptose</name>
        <dbReference type="ChEBI" id="CHEBI:61506"/>
    </ligand>
</feature>
<feature type="binding site" evidence="2 8">
    <location>
        <position position="222"/>
    </location>
    <ligand>
        <name>ADP</name>
        <dbReference type="ChEBI" id="CHEBI:456216"/>
    </ligand>
</feature>
<feature type="binding site" evidence="5 9">
    <location>
        <position position="222"/>
    </location>
    <ligand>
        <name>ADP-L-glycero-beta-D-manno-heptose</name>
        <dbReference type="ChEBI" id="CHEBI:61506"/>
    </ligand>
</feature>
<feature type="binding site" evidence="2 8">
    <location>
        <position position="242"/>
    </location>
    <ligand>
        <name>ADP</name>
        <dbReference type="ChEBI" id="CHEBI:456216"/>
    </ligand>
</feature>
<feature type="binding site" evidence="5 9">
    <location>
        <position position="242"/>
    </location>
    <ligand>
        <name>ADP-L-glycero-beta-D-manno-heptose</name>
        <dbReference type="ChEBI" id="CHEBI:61506"/>
    </ligand>
</feature>
<feature type="binding site" evidence="5 9">
    <location>
        <position position="261"/>
    </location>
    <ligand>
        <name>ADP-L-glycero-beta-D-manno-heptose</name>
        <dbReference type="ChEBI" id="CHEBI:61506"/>
    </ligand>
</feature>
<feature type="binding site" evidence="2 8">
    <location>
        <position position="262"/>
    </location>
    <ligand>
        <name>ADP</name>
        <dbReference type="ChEBI" id="CHEBI:456216"/>
    </ligand>
</feature>
<feature type="binding site" evidence="5 9">
    <location>
        <position position="262"/>
    </location>
    <ligand>
        <name>ADP-L-glycero-beta-D-manno-heptose</name>
        <dbReference type="ChEBI" id="CHEBI:61506"/>
    </ligand>
</feature>
<feature type="binding site" evidence="2 8">
    <location>
        <position position="263"/>
    </location>
    <ligand>
        <name>ADP</name>
        <dbReference type="ChEBI" id="CHEBI:456216"/>
    </ligand>
</feature>
<feature type="binding site" evidence="5 9">
    <location>
        <position position="263"/>
    </location>
    <ligand>
        <name>ADP-L-glycero-beta-D-manno-heptose</name>
        <dbReference type="ChEBI" id="CHEBI:61506"/>
    </ligand>
</feature>
<feature type="binding site" evidence="5 9">
    <location>
        <position position="266"/>
    </location>
    <ligand>
        <name>ADP-L-glycero-beta-D-manno-heptose</name>
        <dbReference type="ChEBI" id="CHEBI:61506"/>
    </ligand>
</feature>
<feature type="mutagenesis site" description="4688-fold decrease in specific activity." evidence="2">
    <original>D</original>
    <variation>A</variation>
    <location>
        <position position="13"/>
    </location>
</feature>
<feature type="mutagenesis site" description="926-fold decrease in specific activity." evidence="2">
    <original>K</original>
    <variation>A</variation>
    <location>
        <position position="192"/>
    </location>
</feature>
<feature type="mutagenesis site" description="2027-fold decrease in specific activity." evidence="2">
    <original>D</original>
    <variation>A</variation>
    <location>
        <position position="261"/>
    </location>
</feature>
<feature type="mutagenesis site" description="1.8-fold decrease in specific activity." evidence="2">
    <original>H</original>
    <variation>A</variation>
    <location>
        <position position="266"/>
    </location>
</feature>
<organism>
    <name type="scientific">Escherichia coli O18:K1:H7 (strain RS218 / NMEC)</name>
    <dbReference type="NCBI Taxonomy" id="439184"/>
    <lineage>
        <taxon>Bacteria</taxon>
        <taxon>Pseudomonadati</taxon>
        <taxon>Pseudomonadota</taxon>
        <taxon>Gammaproteobacteria</taxon>
        <taxon>Enterobacterales</taxon>
        <taxon>Enterobacteriaceae</taxon>
        <taxon>Escherichia</taxon>
    </lineage>
</organism>
<evidence type="ECO:0000250" key="1">
    <source>
        <dbReference type="UniProtKB" id="P24173"/>
    </source>
</evidence>
<evidence type="ECO:0000269" key="2">
    <source>
    </source>
</evidence>
<evidence type="ECO:0000303" key="3">
    <source>
    </source>
</evidence>
<evidence type="ECO:0000305" key="4"/>
<evidence type="ECO:0000305" key="5">
    <source>
    </source>
</evidence>
<evidence type="ECO:0000312" key="6">
    <source>
        <dbReference type="EMBL" id="AJM75822.1"/>
    </source>
</evidence>
<evidence type="ECO:0007744" key="7">
    <source>
        <dbReference type="PDB" id="2GT1"/>
    </source>
</evidence>
<evidence type="ECO:0007744" key="8">
    <source>
        <dbReference type="PDB" id="2H1F"/>
    </source>
</evidence>
<evidence type="ECO:0007744" key="9">
    <source>
        <dbReference type="PDB" id="2H1H"/>
    </source>
</evidence>
<name>WAAC_ECOK8</name>